<feature type="chain" id="PRO_0000202061" description="Excitatory amino acid transporter 2">
    <location>
        <begin position="1"/>
        <end position="574"/>
    </location>
</feature>
<feature type="topological domain" description="Cytoplasmic" evidence="18">
    <location>
        <begin position="1"/>
        <end position="44"/>
    </location>
</feature>
<feature type="transmembrane region" description="Helical" evidence="5">
    <location>
        <begin position="45"/>
        <end position="64"/>
    </location>
</feature>
<feature type="topological domain" description="Extracellular" evidence="18">
    <location>
        <begin position="65"/>
        <end position="87"/>
    </location>
</feature>
<feature type="transmembrane region" description="Helical" evidence="5">
    <location>
        <begin position="88"/>
        <end position="108"/>
    </location>
</feature>
<feature type="topological domain" description="Cytoplasmic" evidence="18">
    <location>
        <begin position="109"/>
        <end position="120"/>
    </location>
</feature>
<feature type="transmembrane region" description="Helical" evidence="5">
    <location>
        <begin position="121"/>
        <end position="142"/>
    </location>
</feature>
<feature type="topological domain" description="Extracellular" evidence="18">
    <location>
        <begin position="143"/>
        <end position="235"/>
    </location>
</feature>
<feature type="transmembrane region" description="Helical; Name=4" evidence="3">
    <location>
        <begin position="236"/>
        <end position="259"/>
    </location>
</feature>
<feature type="topological domain" description="Cytoplasmic" evidence="18">
    <location>
        <begin position="260"/>
        <end position="268"/>
    </location>
</feature>
<feature type="transmembrane region" description="Helical; Name=5" evidence="3">
    <location>
        <begin position="269"/>
        <end position="296"/>
    </location>
</feature>
<feature type="topological domain" description="Extracellular" evidence="18">
    <location>
        <begin position="297"/>
        <end position="317"/>
    </location>
</feature>
<feature type="transmembrane region" description="Helical; Name=6" evidence="3">
    <location>
        <begin position="318"/>
        <end position="339"/>
    </location>
</feature>
<feature type="topological domain" description="Cytoplasmic" evidence="18">
    <location>
        <begin position="340"/>
        <end position="344"/>
    </location>
</feature>
<feature type="intramembrane region" description="Discontinuously helical" evidence="3">
    <location>
        <begin position="345"/>
        <end position="375"/>
    </location>
</feature>
<feature type="topological domain" description="Cytoplasmic" evidence="18">
    <location>
        <begin position="376"/>
        <end position="384"/>
    </location>
</feature>
<feature type="transmembrane region" description="Helical; Name=7" evidence="3">
    <location>
        <begin position="385"/>
        <end position="411"/>
    </location>
</feature>
<feature type="topological domain" description="Extracellular" evidence="18">
    <location>
        <begin position="412"/>
        <end position="424"/>
    </location>
</feature>
<feature type="intramembrane region" description="Discontinuously helical" evidence="3">
    <location>
        <begin position="425"/>
        <end position="458"/>
    </location>
</feature>
<feature type="topological domain" description="Extracellular" evidence="18">
    <location>
        <begin position="459"/>
        <end position="471"/>
    </location>
</feature>
<feature type="transmembrane region" description="Helical; Name=8" evidence="3">
    <location>
        <begin position="472"/>
        <end position="493"/>
    </location>
</feature>
<feature type="topological domain" description="Cytoplasmic" evidence="18">
    <location>
        <begin position="494"/>
        <end position="574"/>
    </location>
</feature>
<feature type="binding site" evidence="3">
    <location>
        <begin position="362"/>
        <end position="364"/>
    </location>
    <ligand>
        <name>L-aspartate</name>
        <dbReference type="ChEBI" id="CHEBI:29991"/>
    </ligand>
</feature>
<feature type="binding site" evidence="1">
    <location>
        <position position="393"/>
    </location>
    <ligand>
        <name>Na(+)</name>
        <dbReference type="ChEBI" id="CHEBI:29101"/>
        <label>1</label>
    </ligand>
</feature>
<feature type="binding site" evidence="3">
    <location>
        <position position="395"/>
    </location>
    <ligand>
        <name>Na(+)</name>
        <dbReference type="ChEBI" id="CHEBI:29101"/>
        <label>2</label>
    </ligand>
</feature>
<feature type="binding site" evidence="1">
    <location>
        <position position="397"/>
    </location>
    <ligand>
        <name>Na(+)</name>
        <dbReference type="ChEBI" id="CHEBI:29101"/>
        <label>1</label>
    </ligand>
</feature>
<feature type="binding site" evidence="3">
    <location>
        <position position="401"/>
    </location>
    <ligand>
        <name>L-aspartate</name>
        <dbReference type="ChEBI" id="CHEBI:29991"/>
    </ligand>
</feature>
<feature type="binding site" evidence="3">
    <location>
        <begin position="442"/>
        <end position="446"/>
    </location>
    <ligand>
        <name>L-aspartate</name>
        <dbReference type="ChEBI" id="CHEBI:29991"/>
    </ligand>
</feature>
<feature type="binding site" evidence="3">
    <location>
        <position position="475"/>
    </location>
    <ligand>
        <name>L-aspartate</name>
        <dbReference type="ChEBI" id="CHEBI:29991"/>
    </ligand>
</feature>
<feature type="binding site" evidence="3">
    <location>
        <position position="482"/>
    </location>
    <ligand>
        <name>L-aspartate</name>
        <dbReference type="ChEBI" id="CHEBI:29991"/>
    </ligand>
</feature>
<feature type="binding site" evidence="1">
    <location>
        <position position="482"/>
    </location>
    <ligand>
        <name>Na(+)</name>
        <dbReference type="ChEBI" id="CHEBI:29101"/>
        <label>1</label>
    </ligand>
</feature>
<feature type="binding site" evidence="1">
    <location>
        <position position="486"/>
    </location>
    <ligand>
        <name>Na(+)</name>
        <dbReference type="ChEBI" id="CHEBI:29101"/>
        <label>1</label>
    </ligand>
</feature>
<feature type="modified residue" description="Phosphoserine" evidence="2">
    <location>
        <position position="3"/>
    </location>
</feature>
<feature type="modified residue" description="Phosphoserine" evidence="2">
    <location>
        <position position="21"/>
    </location>
</feature>
<feature type="modified residue" description="Phosphoserine" evidence="2">
    <location>
        <position position="25"/>
    </location>
</feature>
<feature type="modified residue" description="Phosphoserine" evidence="4">
    <location>
        <position position="506"/>
    </location>
</feature>
<feature type="modified residue" description="Phosphoserine" evidence="4">
    <location>
        <position position="521"/>
    </location>
</feature>
<feature type="modified residue" description="Phosphoserine" evidence="4">
    <location>
        <position position="532"/>
    </location>
</feature>
<feature type="modified residue" description="Phosphoserine" evidence="4">
    <location>
        <position position="534"/>
    </location>
</feature>
<feature type="modified residue" description="Phosphotyrosine" evidence="4">
    <location>
        <position position="539"/>
    </location>
</feature>
<feature type="modified residue" description="Phosphoserine" evidence="4">
    <location>
        <position position="544"/>
    </location>
</feature>
<feature type="modified residue" description="Phosphoserine" evidence="4">
    <location>
        <position position="560"/>
    </location>
</feature>
<feature type="modified residue" description="Phosphoserine" evidence="4">
    <location>
        <position position="564"/>
    </location>
</feature>
<feature type="lipid moiety-binding region" description="S-palmitoyl cysteine" evidence="4">
    <location>
        <position position="38"/>
    </location>
</feature>
<feature type="glycosylation site" description="N-linked (GlcNAc...) asparagine" evidence="5">
    <location>
        <position position="206"/>
    </location>
</feature>
<feature type="glycosylation site" description="N-linked (GlcNAc...) asparagine" evidence="5">
    <location>
        <position position="216"/>
    </location>
</feature>
<feature type="splice variant" id="VSP_037152" description="In isoform 2." evidence="17">
    <location>
        <begin position="1"/>
        <end position="9"/>
    </location>
</feature>
<feature type="splice variant" id="VSP_054934" description="In isoform 3." evidence="15">
    <original>TLAANGKSADCSVEEEPWKREK</original>
    <variation>HFPFMDIETCI</variation>
    <location>
        <begin position="553"/>
        <end position="574"/>
    </location>
</feature>
<feature type="sequence variant" id="VAR_077083" description="In DEE41; dbSNP:rs886037942." evidence="12 13">
    <original>G</original>
    <variation>R</variation>
    <location>
        <position position="82"/>
    </location>
</feature>
<feature type="sequence variant" id="VAR_077084" description="In DEE41; dbSNP:rs886037943." evidence="12">
    <original>L</original>
    <variation>P</variation>
    <location>
        <position position="85"/>
    </location>
</feature>
<feature type="sequence variant" id="VAR_080229" description="In DEE41; dbSNP:rs781379291." evidence="13">
    <original>P</original>
    <variation>R</variation>
    <location>
        <position position="289"/>
    </location>
</feature>
<feature type="sequence conflict" description="In Ref. 6; BAG60911." evidence="18" ref="6">
    <original>A</original>
    <variation>T</variation>
    <location>
        <position position="7"/>
    </location>
</feature>
<feature type="sequence conflict" description="In Ref. 1; AAA50429." evidence="18" ref="1">
    <original>H</original>
    <variation>P</variation>
    <location>
        <position position="19"/>
    </location>
</feature>
<feature type="sequence conflict" description="In Ref. 3; CAA83532." evidence="18" ref="3">
    <original>E</original>
    <variation>G</variation>
    <location>
        <position position="27"/>
    </location>
</feature>
<feature type="sequence conflict" description="In Ref. 2; AAA18900." evidence="18" ref="2">
    <original>T</original>
    <variation>Q</variation>
    <location>
        <position position="50"/>
    </location>
</feature>
<feature type="sequence conflict" description="In Ref. 2; AAA18900." evidence="18" ref="2">
    <original>A</original>
    <variation>S</variation>
    <location>
        <position position="58"/>
    </location>
</feature>
<feature type="sequence conflict" description="In Ref. 3; CAA83532." evidence="18" ref="3">
    <original>A</original>
    <variation>G</variation>
    <location>
        <position position="141"/>
    </location>
</feature>
<feature type="sequence conflict" description="In Ref. 3; CAA83532." evidence="18" ref="3">
    <original>P</original>
    <variation>A</variation>
    <location>
        <position position="155"/>
    </location>
</feature>
<feature type="sequence conflict" description="In Ref. 1; AAA50429." evidence="18" ref="1">
    <original>V</original>
    <variation>E</variation>
    <location>
        <position position="211"/>
    </location>
</feature>
<feature type="sequence conflict" description="In Ref. 3; CAA83532." evidence="18" ref="3">
    <original>GIA</original>
    <variation>AIP</variation>
    <location>
        <begin position="253"/>
        <end position="255"/>
    </location>
</feature>
<feature type="sequence conflict" description="In Ref. 3; CAA83532." evidence="18" ref="3">
    <original>AKLMVDFFNILNEIVMKLVIMIMWYSP</original>
    <variation>GQADGGFLQHFERDCNEVSDHDHVVLS</variation>
    <location>
        <begin position="263"/>
        <end position="289"/>
    </location>
</feature>
<feature type="sequence conflict" description="In Ref. 1; AAA50429." evidence="18" ref="1">
    <original>F</original>
    <variation>L</variation>
    <location>
        <position position="347"/>
    </location>
</feature>
<feature type="sequence conflict" description="In Ref. 3; CAA83532." evidence="18" ref="3">
    <original>Y</original>
    <variation>F</variation>
    <location>
        <position position="539"/>
    </location>
</feature>
<feature type="sequence conflict" description="In Ref. 3; CAA83532." evidence="18" ref="3">
    <original>A</original>
    <variation>G</variation>
    <location>
        <position position="556"/>
    </location>
</feature>
<feature type="sequence conflict" description="In Ref. 3; CAA83532." evidence="18" ref="3">
    <original>CSV</original>
    <variation>RVL</variation>
    <location>
        <begin position="563"/>
        <end position="565"/>
    </location>
</feature>
<feature type="sequence conflict" description="In Ref. 3; CAA83532." evidence="18" ref="3">
    <original>W</original>
    <variation>G</variation>
    <location>
        <position position="570"/>
    </location>
</feature>
<feature type="helix" evidence="20">
    <location>
        <begin position="38"/>
        <end position="43"/>
    </location>
</feature>
<feature type="helix" evidence="20">
    <location>
        <begin position="45"/>
        <end position="64"/>
    </location>
</feature>
<feature type="helix" evidence="20">
    <location>
        <begin position="72"/>
        <end position="91"/>
    </location>
</feature>
<feature type="helix" evidence="20">
    <location>
        <begin position="93"/>
        <end position="106"/>
    </location>
</feature>
<feature type="helix" evidence="20">
    <location>
        <begin position="110"/>
        <end position="113"/>
    </location>
</feature>
<feature type="helix" evidence="20">
    <location>
        <begin position="115"/>
        <end position="142"/>
    </location>
</feature>
<feature type="turn" evidence="20">
    <location>
        <begin position="144"/>
        <end position="147"/>
    </location>
</feature>
<feature type="helix" evidence="20">
    <location>
        <begin position="164"/>
        <end position="175"/>
    </location>
</feature>
<feature type="helix" evidence="20">
    <location>
        <begin position="180"/>
        <end position="183"/>
    </location>
</feature>
<feature type="strand" evidence="20">
    <location>
        <begin position="186"/>
        <end position="193"/>
    </location>
</feature>
<feature type="strand" evidence="20">
    <location>
        <begin position="231"/>
        <end position="239"/>
    </location>
</feature>
<feature type="helix" evidence="20">
    <location>
        <begin position="242"/>
        <end position="259"/>
    </location>
</feature>
<feature type="turn" evidence="20">
    <location>
        <begin position="260"/>
        <end position="263"/>
    </location>
</feature>
<feature type="helix" evidence="20">
    <location>
        <begin position="264"/>
        <end position="302"/>
    </location>
</feature>
<feature type="helix" evidence="20">
    <location>
        <begin position="306"/>
        <end position="329"/>
    </location>
</feature>
<feature type="helix" evidence="20">
    <location>
        <begin position="331"/>
        <end position="340"/>
    </location>
</feature>
<feature type="helix" evidence="20">
    <location>
        <begin position="344"/>
        <end position="350"/>
    </location>
</feature>
<feature type="helix" evidence="20">
    <location>
        <begin position="352"/>
        <end position="361"/>
    </location>
</feature>
<feature type="turn" evidence="20">
    <location>
        <begin position="364"/>
        <end position="367"/>
    </location>
</feature>
<feature type="helix" evidence="20">
    <location>
        <begin position="368"/>
        <end position="378"/>
    </location>
</feature>
<feature type="helix" evidence="20">
    <location>
        <begin position="383"/>
        <end position="393"/>
    </location>
</feature>
<feature type="helix" evidence="20">
    <location>
        <begin position="399"/>
        <end position="415"/>
    </location>
</feature>
<feature type="helix" evidence="20">
    <location>
        <begin position="422"/>
        <end position="438"/>
    </location>
</feature>
<feature type="strand" evidence="20">
    <location>
        <begin position="441"/>
        <end position="444"/>
    </location>
</feature>
<feature type="helix" evidence="20">
    <location>
        <begin position="446"/>
        <end position="457"/>
    </location>
</feature>
<feature type="helix" evidence="20">
    <location>
        <begin position="461"/>
        <end position="463"/>
    </location>
</feature>
<feature type="helix" evidence="20">
    <location>
        <begin position="464"/>
        <end position="469"/>
    </location>
</feature>
<feature type="helix" evidence="20">
    <location>
        <begin position="471"/>
        <end position="496"/>
    </location>
</feature>
<feature type="helix" evidence="20">
    <location>
        <begin position="498"/>
        <end position="506"/>
    </location>
</feature>
<gene>
    <name evidence="19" type="primary">SLC1A2</name>
    <name evidence="16" type="synonym">EAAT2</name>
    <name type="synonym">GLT1</name>
</gene>
<reference key="1">
    <citation type="journal article" date="1994" name="J. Neurosci.">
        <title>Functional comparisons of three glutamate transporter subtypes cloned from human motor cortex.</title>
        <authorList>
            <person name="Arriza J.L."/>
            <person name="Fairman W.A."/>
            <person name="Wendy A."/>
            <person name="Wadiche J.I."/>
            <person name="Murdoch G.H."/>
            <person name="Kavanaugh M.P."/>
            <person name="Amara S.G."/>
        </authorList>
    </citation>
    <scope>NUCLEOTIDE SEQUENCE [MRNA] (ISOFORM 1)</scope>
    <scope>FUNCTION</scope>
    <scope>SUBCELLULAR LOCATION</scope>
    <scope>TRANSPORTER ACTIVITY</scope>
    <scope>BIOPHYSICOCHEMICAL PROPERTIES</scope>
    <source>
        <tissue>Brain cortex</tissue>
    </source>
</reference>
<reference key="2">
    <citation type="journal article" date="1994" name="Biochim. Biophys. Acta">
        <title>Molecular cloning of human brain glutamate/aspartate transporter II.</title>
        <authorList>
            <person name="Shashidharan P."/>
            <person name="Wittenberg I."/>
            <person name="Plaitakis A."/>
        </authorList>
    </citation>
    <scope>NUCLEOTIDE SEQUENCE [MRNA] (ISOFORM 2)</scope>
    <source>
        <tissue>Brain</tissue>
    </source>
</reference>
<reference key="3">
    <citation type="journal article" date="1994" name="Biochim. Biophys. Acta">
        <title>Cloning and characterization of a glutamate transporter cDNA from human brain and pancreas.</title>
        <authorList>
            <person name="Manfras B.J."/>
            <person name="Rudert W.A."/>
            <person name="Trucco M."/>
            <person name="Boehm B.O."/>
        </authorList>
    </citation>
    <scope>NUCLEOTIDE SEQUENCE [MRNA] (ISOFORM 1)</scope>
    <source>
        <tissue>Pancreas</tissue>
    </source>
</reference>
<reference key="4">
    <citation type="journal article" date="1998" name="Mol. Pharmacol.">
        <title>DL-threo-beta-benzyloxyaspartate, a potent blocker of excitatory amino acid transporters.</title>
        <authorList>
            <person name="Shimamoto K."/>
            <person name="Lebrun B."/>
            <person name="Yasuda-Kamatani Y."/>
            <person name="Sakaitani M."/>
            <person name="Shigeri Y."/>
            <person name="Yumoto N."/>
            <person name="Nakajima T."/>
        </authorList>
    </citation>
    <scope>NUCLEOTIDE SEQUENCE [MRNA] (ISOFORM 1)</scope>
    <source>
        <tissue>Brain</tissue>
    </source>
</reference>
<reference key="5">
    <citation type="journal article" date="2003" name="J. Neurochem.">
        <title>Cloning and characterization of the 3'-untranslated region of the human excitatory amino acid transporter 2 transcript.</title>
        <authorList>
            <person name="Kim S.Y."/>
            <person name="Chao W."/>
            <person name="Choi S.Y."/>
            <person name="Volsky D.J."/>
        </authorList>
    </citation>
    <scope>NUCLEOTIDE SEQUENCE [MRNA] (ISOFORM 1)</scope>
</reference>
<reference key="6">
    <citation type="journal article" date="2004" name="Nat. Genet.">
        <title>Complete sequencing and characterization of 21,243 full-length human cDNAs.</title>
        <authorList>
            <person name="Ota T."/>
            <person name="Suzuki Y."/>
            <person name="Nishikawa T."/>
            <person name="Otsuki T."/>
            <person name="Sugiyama T."/>
            <person name="Irie R."/>
            <person name="Wakamatsu A."/>
            <person name="Hayashi K."/>
            <person name="Sato H."/>
            <person name="Nagai K."/>
            <person name="Kimura K."/>
            <person name="Makita H."/>
            <person name="Sekine M."/>
            <person name="Obayashi M."/>
            <person name="Nishi T."/>
            <person name="Shibahara T."/>
            <person name="Tanaka T."/>
            <person name="Ishii S."/>
            <person name="Yamamoto J."/>
            <person name="Saito K."/>
            <person name="Kawai Y."/>
            <person name="Isono Y."/>
            <person name="Nakamura Y."/>
            <person name="Nagahari K."/>
            <person name="Murakami K."/>
            <person name="Yasuda T."/>
            <person name="Iwayanagi T."/>
            <person name="Wagatsuma M."/>
            <person name="Shiratori A."/>
            <person name="Sudo H."/>
            <person name="Hosoiri T."/>
            <person name="Kaku Y."/>
            <person name="Kodaira H."/>
            <person name="Kondo H."/>
            <person name="Sugawara M."/>
            <person name="Takahashi M."/>
            <person name="Kanda K."/>
            <person name="Yokoi T."/>
            <person name="Furuya T."/>
            <person name="Kikkawa E."/>
            <person name="Omura Y."/>
            <person name="Abe K."/>
            <person name="Kamihara K."/>
            <person name="Katsuta N."/>
            <person name="Sato K."/>
            <person name="Tanikawa M."/>
            <person name="Yamazaki M."/>
            <person name="Ninomiya K."/>
            <person name="Ishibashi T."/>
            <person name="Yamashita H."/>
            <person name="Murakawa K."/>
            <person name="Fujimori K."/>
            <person name="Tanai H."/>
            <person name="Kimata M."/>
            <person name="Watanabe M."/>
            <person name="Hiraoka S."/>
            <person name="Chiba Y."/>
            <person name="Ishida S."/>
            <person name="Ono Y."/>
            <person name="Takiguchi S."/>
            <person name="Watanabe S."/>
            <person name="Yosida M."/>
            <person name="Hotuta T."/>
            <person name="Kusano J."/>
            <person name="Kanehori K."/>
            <person name="Takahashi-Fujii A."/>
            <person name="Hara H."/>
            <person name="Tanase T.-O."/>
            <person name="Nomura Y."/>
            <person name="Togiya S."/>
            <person name="Komai F."/>
            <person name="Hara R."/>
            <person name="Takeuchi K."/>
            <person name="Arita M."/>
            <person name="Imose N."/>
            <person name="Musashino K."/>
            <person name="Yuuki H."/>
            <person name="Oshima A."/>
            <person name="Sasaki N."/>
            <person name="Aotsuka S."/>
            <person name="Yoshikawa Y."/>
            <person name="Matsunawa H."/>
            <person name="Ichihara T."/>
            <person name="Shiohata N."/>
            <person name="Sano S."/>
            <person name="Moriya S."/>
            <person name="Momiyama H."/>
            <person name="Satoh N."/>
            <person name="Takami S."/>
            <person name="Terashima Y."/>
            <person name="Suzuki O."/>
            <person name="Nakagawa S."/>
            <person name="Senoh A."/>
            <person name="Mizoguchi H."/>
            <person name="Goto Y."/>
            <person name="Shimizu F."/>
            <person name="Wakebe H."/>
            <person name="Hishigaki H."/>
            <person name="Watanabe T."/>
            <person name="Sugiyama A."/>
            <person name="Takemoto M."/>
            <person name="Kawakami B."/>
            <person name="Yamazaki M."/>
            <person name="Watanabe K."/>
            <person name="Kumagai A."/>
            <person name="Itakura S."/>
            <person name="Fukuzumi Y."/>
            <person name="Fujimori Y."/>
            <person name="Komiyama M."/>
            <person name="Tashiro H."/>
            <person name="Tanigami A."/>
            <person name="Fujiwara T."/>
            <person name="Ono T."/>
            <person name="Yamada K."/>
            <person name="Fujii Y."/>
            <person name="Ozaki K."/>
            <person name="Hirao M."/>
            <person name="Ohmori Y."/>
            <person name="Kawabata A."/>
            <person name="Hikiji T."/>
            <person name="Kobatake N."/>
            <person name="Inagaki H."/>
            <person name="Ikema Y."/>
            <person name="Okamoto S."/>
            <person name="Okitani R."/>
            <person name="Kawakami T."/>
            <person name="Noguchi S."/>
            <person name="Itoh T."/>
            <person name="Shigeta K."/>
            <person name="Senba T."/>
            <person name="Matsumura K."/>
            <person name="Nakajima Y."/>
            <person name="Mizuno T."/>
            <person name="Morinaga M."/>
            <person name="Sasaki M."/>
            <person name="Togashi T."/>
            <person name="Oyama M."/>
            <person name="Hata H."/>
            <person name="Watanabe M."/>
            <person name="Komatsu T."/>
            <person name="Mizushima-Sugano J."/>
            <person name="Satoh T."/>
            <person name="Shirai Y."/>
            <person name="Takahashi Y."/>
            <person name="Nakagawa K."/>
            <person name="Okumura K."/>
            <person name="Nagase T."/>
            <person name="Nomura N."/>
            <person name="Kikuchi H."/>
            <person name="Masuho Y."/>
            <person name="Yamashita R."/>
            <person name="Nakai K."/>
            <person name="Yada T."/>
            <person name="Nakamura Y."/>
            <person name="Ohara O."/>
            <person name="Isogai T."/>
            <person name="Sugano S."/>
        </authorList>
    </citation>
    <scope>NUCLEOTIDE SEQUENCE [LARGE SCALE MRNA] (ISOFORM 3)</scope>
</reference>
<reference key="7">
    <citation type="journal article" date="2006" name="Nature">
        <title>Human chromosome 11 DNA sequence and analysis including novel gene identification.</title>
        <authorList>
            <person name="Taylor T.D."/>
            <person name="Noguchi H."/>
            <person name="Totoki Y."/>
            <person name="Toyoda A."/>
            <person name="Kuroki Y."/>
            <person name="Dewar K."/>
            <person name="Lloyd C."/>
            <person name="Itoh T."/>
            <person name="Takeda T."/>
            <person name="Kim D.-W."/>
            <person name="She X."/>
            <person name="Barlow K.F."/>
            <person name="Bloom T."/>
            <person name="Bruford E."/>
            <person name="Chang J.L."/>
            <person name="Cuomo C.A."/>
            <person name="Eichler E."/>
            <person name="FitzGerald M.G."/>
            <person name="Jaffe D.B."/>
            <person name="LaButti K."/>
            <person name="Nicol R."/>
            <person name="Park H.-S."/>
            <person name="Seaman C."/>
            <person name="Sougnez C."/>
            <person name="Yang X."/>
            <person name="Zimmer A.R."/>
            <person name="Zody M.C."/>
            <person name="Birren B.W."/>
            <person name="Nusbaum C."/>
            <person name="Fujiyama A."/>
            <person name="Hattori M."/>
            <person name="Rogers J."/>
            <person name="Lander E.S."/>
            <person name="Sakaki Y."/>
        </authorList>
    </citation>
    <scope>NUCLEOTIDE SEQUENCE [LARGE SCALE GENOMIC DNA]</scope>
</reference>
<reference key="8">
    <citation type="submission" date="2005-09" db="EMBL/GenBank/DDBJ databases">
        <authorList>
            <person name="Mural R.J."/>
            <person name="Istrail S."/>
            <person name="Sutton G.G."/>
            <person name="Florea L."/>
            <person name="Halpern A.L."/>
            <person name="Mobarry C.M."/>
            <person name="Lippert R."/>
            <person name="Walenz B."/>
            <person name="Shatkay H."/>
            <person name="Dew I."/>
            <person name="Miller J.R."/>
            <person name="Flanigan M.J."/>
            <person name="Edwards N.J."/>
            <person name="Bolanos R."/>
            <person name="Fasulo D."/>
            <person name="Halldorsson B.V."/>
            <person name="Hannenhalli S."/>
            <person name="Turner R."/>
            <person name="Yooseph S."/>
            <person name="Lu F."/>
            <person name="Nusskern D.R."/>
            <person name="Shue B.C."/>
            <person name="Zheng X.H."/>
            <person name="Zhong F."/>
            <person name="Delcher A.L."/>
            <person name="Huson D.H."/>
            <person name="Kravitz S.A."/>
            <person name="Mouchard L."/>
            <person name="Reinert K."/>
            <person name="Remington K.A."/>
            <person name="Clark A.G."/>
            <person name="Waterman M.S."/>
            <person name="Eichler E.E."/>
            <person name="Adams M.D."/>
            <person name="Hunkapiller M.W."/>
            <person name="Myers E.W."/>
            <person name="Venter J.C."/>
        </authorList>
    </citation>
    <scope>NUCLEOTIDE SEQUENCE [LARGE SCALE GENOMIC DNA]</scope>
</reference>
<reference key="9">
    <citation type="journal article" date="2004" name="Genome Res.">
        <title>The status, quality, and expansion of the NIH full-length cDNA project: the Mammalian Gene Collection (MGC).</title>
        <authorList>
            <consortium name="The MGC Project Team"/>
        </authorList>
    </citation>
    <scope>NUCLEOTIDE SEQUENCE [LARGE SCALE MRNA] (ISOFORM 1)</scope>
</reference>
<reference key="10">
    <citation type="journal article" date="2003" name="J. Biol. Chem.">
        <title>Glutamate modifies ion conduction and voltage-dependent gating of excitatory amino acid transporter-associated anion channels.</title>
        <authorList>
            <person name="Melzer N."/>
            <person name="Biela A."/>
            <person name="Fahlke C."/>
        </authorList>
    </citation>
    <scope>FUNCTION</scope>
    <scope>SUBCELLULAR LOCATION</scope>
</reference>
<reference key="11">
    <citation type="journal article" date="2004" name="J. Biol. Chem.">
        <title>A trimeric quaternary structure is conserved in bacterial and human glutamate transporters.</title>
        <authorList>
            <person name="Gendreau S."/>
            <person name="Voswinkel S."/>
            <person name="Torres-Salazar D."/>
            <person name="Lang N."/>
            <person name="Heidtmann H."/>
            <person name="Detro-Dassen S."/>
            <person name="Schmalzing G."/>
            <person name="Hidalgo P."/>
            <person name="Fahlke C."/>
        </authorList>
    </citation>
    <scope>SUBUNIT</scope>
    <scope>FUNCTION</scope>
    <scope>SUBCELLULAR LOCATION</scope>
    <scope>GLYCOSYLATION</scope>
</reference>
<reference key="12">
    <citation type="journal article" date="2004" name="Nature">
        <title>Structure of a glutamate transporter homologue from Pyrococcus horikoshii.</title>
        <authorList>
            <person name="Yernool D."/>
            <person name="Boudker O."/>
            <person name="Jin Y."/>
            <person name="Gouaux E."/>
        </authorList>
    </citation>
    <scope>SUBUNIT</scope>
</reference>
<reference key="13">
    <citation type="journal article" date="2010" name="J. Biol. Chem.">
        <title>Exon-skipping splice variants of excitatory amino acid transporter-2 (EAAT2) form heteromeric complexes with full-length EAAT2.</title>
        <authorList>
            <person name="Gebhardt F.M."/>
            <person name="Mitrovic A.D."/>
            <person name="Gilbert D.F."/>
            <person name="Vandenberg R.J."/>
            <person name="Lynch J.W."/>
            <person name="Dodd P.R."/>
        </authorList>
    </citation>
    <scope>ALTERNATIVE SPLICING (ISOFORM 3)</scope>
    <scope>SUBUNIT</scope>
</reference>
<reference key="14">
    <citation type="journal article" date="2015" name="J. Biol. Chem.">
        <title>The Hydroxyl Side Chain of a Highly Conserved Serine Residue Is Required for Cation Selectivity and Substrate Transport in the Glial Glutamate Transporter GLT-1/SLC1A2.</title>
        <authorList>
            <person name="Simonin A."/>
            <person name="Montalbetti N."/>
            <person name="Gyimesi G."/>
            <person name="Pujol-Gimenez J."/>
            <person name="Hediger M.A."/>
        </authorList>
    </citation>
    <scope>FUNCTION</scope>
    <scope>SUBCELLULAR LOCATION</scope>
    <scope>SUBUNIT</scope>
</reference>
<reference key="15">
    <citation type="journal article" date="2016" name="J. Membr. Biol.">
        <title>Caveolin-1 Sensitivity of Excitatory Amino Acid Transporters EAAT1, EAAT2, EAAT3, and EAAT4.</title>
        <authorList>
            <person name="Abousaab A."/>
            <person name="Warsi J."/>
            <person name="Elvira B."/>
            <person name="Lang F."/>
        </authorList>
    </citation>
    <scope>FUNCTION</scope>
    <scope>SUBCELLULAR LOCATION</scope>
    <scope>BIOPHYSICOCHEMICAL PROPERTIES</scope>
    <scope>TRANSPORTER ACTIVITY</scope>
</reference>
<reference key="16">
    <citation type="journal article" date="2016" name="Am. J. Hum. Genet.">
        <title>De novo mutations in SLC1A2 and CACNA1A are important causes of epileptic encephalopathies.</title>
        <authorList>
            <consortium name="Epi4K Consortium"/>
        </authorList>
    </citation>
    <scope>INVOLVEMENT IN DEE41</scope>
    <scope>VARIANTS DEE41 ARG-82 AND PRO-85</scope>
</reference>
<reference key="17">
    <citation type="journal article" date="2017" name="Am. J. Hum. Genet.">
        <title>De novo mutations in YWHAG cause early-onset epilepsy.</title>
        <authorList>
            <consortium name="Epilepsy Genomics Study"/>
            <consortium name="Deciphering Developmental Disorders Study"/>
            <person name="Guella I."/>
            <person name="McKenzie M.B."/>
            <person name="Evans D.M."/>
            <person name="Buerki S.E."/>
            <person name="Toyota E.B."/>
            <person name="Van Allen M.I."/>
            <person name="Suri M."/>
            <person name="Elmslie F."/>
            <person name="Simon M.E.H."/>
            <person name="van Gassen K.L.I."/>
            <person name="Heron D."/>
            <person name="Keren B."/>
            <person name="Nava C."/>
            <person name="Connolly M.B."/>
            <person name="Demos M."/>
            <person name="Farrer M.J."/>
        </authorList>
    </citation>
    <scope>VARIANTS DEE41 ARG-82 AND ARG-289</scope>
</reference>
<accession>P43004</accession>
<accession>B4DQE9</accession>
<accession>Q14417</accession>
<accession>Q541G6</accession>
<accession>U3KQQ4</accession>
<name>EAA2_HUMAN</name>
<sequence length="574" mass="62104">MASTEGANNMPKQVEVRMHDSHLGSEEPKHRHLGLRLCDKLGKNLLLTLTVFGVILGAVCGGLLRLASPIHPDVVMLIAFPGDILMRMLKMLILPLIISSLITGLSGLDAKASGRLGTRAMVYYMSTTIIAAVLGVILVLAIHPGNPKLKKQLGPGKKNDEVSSLDAFLDLIRNLFPENLVQACFQQIQTVTKKVLVAPPPDEEANATSAVVSLLNETVTEVPEETKMVIKKGLEFKDGMNVLGLIGFFIAFGIAMGKMGDQAKLMVDFFNILNEIVMKLVIMIMWYSPLGIACLICGKIIAIKDLEVVARQLGMYMVTVIIGLIIHGGIFLPLIYFVVTRKNPFSFFAGIFQAWITALGTASSAGTLPVTFRCLEENLGIDKRVTRFVLPVGATINMDGTALYEAVAAIFIAQMNGVVLDGGQIVTVSLTATLASVGAASIPSAGLVTMLLILTAVGLPTEDISLLVAVDWLLDRMRTSVNVVGDSFGAGIVYHLSKSELDTIDSQHRVHEDIEMTKTQSIYDDMKNHRESNSNQCVYAAHNSVIVDECKVTLAANGKSADCSVEEEPWKREK</sequence>
<dbReference type="EMBL" id="U03505">
    <property type="protein sequence ID" value="AAA50429.1"/>
    <property type="molecule type" value="mRNA"/>
</dbReference>
<dbReference type="EMBL" id="U01824">
    <property type="protein sequence ID" value="AAA18900.1"/>
    <property type="molecule type" value="mRNA"/>
</dbReference>
<dbReference type="EMBL" id="Z32517">
    <property type="protein sequence ID" value="CAA83532.1"/>
    <property type="molecule type" value="mRNA"/>
</dbReference>
<dbReference type="EMBL" id="D85884">
    <property type="protein sequence ID" value="BAA28706.1"/>
    <property type="molecule type" value="mRNA"/>
</dbReference>
<dbReference type="EMBL" id="AY066021">
    <property type="protein sequence ID" value="AAL57716.1"/>
    <property type="molecule type" value="mRNA"/>
</dbReference>
<dbReference type="EMBL" id="AK298769">
    <property type="protein sequence ID" value="BAG60911.1"/>
    <property type="molecule type" value="mRNA"/>
</dbReference>
<dbReference type="EMBL" id="AC090625">
    <property type="status" value="NOT_ANNOTATED_CDS"/>
    <property type="molecule type" value="Genomic_DNA"/>
</dbReference>
<dbReference type="EMBL" id="AL133330">
    <property type="status" value="NOT_ANNOTATED_CDS"/>
    <property type="molecule type" value="Genomic_DNA"/>
</dbReference>
<dbReference type="EMBL" id="CH471064">
    <property type="protein sequence ID" value="EAW68143.1"/>
    <property type="molecule type" value="Genomic_DNA"/>
</dbReference>
<dbReference type="EMBL" id="BC132768">
    <property type="protein sequence ID" value="AAI32769.1"/>
    <property type="molecule type" value="mRNA"/>
</dbReference>
<dbReference type="CCDS" id="CCDS31459.1">
    <molecule id="P43004-1"/>
</dbReference>
<dbReference type="CCDS" id="CCDS55756.1">
    <molecule id="P43004-2"/>
</dbReference>
<dbReference type="PIR" id="I37426">
    <property type="entry name" value="I37426"/>
</dbReference>
<dbReference type="PIR" id="I38432">
    <property type="entry name" value="I38432"/>
</dbReference>
<dbReference type="RefSeq" id="NP_001182657.1">
    <molecule id="P43004-2"/>
    <property type="nucleotide sequence ID" value="NM_001195728.3"/>
</dbReference>
<dbReference type="RefSeq" id="NP_001239581.1">
    <molecule id="P43004-2"/>
    <property type="nucleotide sequence ID" value="NM_001252652.2"/>
</dbReference>
<dbReference type="RefSeq" id="NP_004162.2">
    <molecule id="P43004-1"/>
    <property type="nucleotide sequence ID" value="NM_004171.3"/>
</dbReference>
<dbReference type="RefSeq" id="XP_016873626.1">
    <molecule id="P43004-2"/>
    <property type="nucleotide sequence ID" value="XM_017018137.2"/>
</dbReference>
<dbReference type="RefSeq" id="XP_016873627.1">
    <molecule id="P43004-2"/>
    <property type="nucleotide sequence ID" value="XM_017018138.2"/>
</dbReference>
<dbReference type="RefSeq" id="XP_047283394.1">
    <molecule id="P43004-2"/>
    <property type="nucleotide sequence ID" value="XM_047427438.1"/>
</dbReference>
<dbReference type="RefSeq" id="XP_047283396.1">
    <molecule id="P43004-2"/>
    <property type="nucleotide sequence ID" value="XM_047427440.1"/>
</dbReference>
<dbReference type="RefSeq" id="XP_047283398.1">
    <molecule id="P43004-2"/>
    <property type="nucleotide sequence ID" value="XM_047427442.1"/>
</dbReference>
<dbReference type="RefSeq" id="XP_047283399.1">
    <molecule id="P43004-2"/>
    <property type="nucleotide sequence ID" value="XM_047427443.1"/>
</dbReference>
<dbReference type="RefSeq" id="XP_054225649.1">
    <molecule id="P43004-2"/>
    <property type="nucleotide sequence ID" value="XM_054369674.1"/>
</dbReference>
<dbReference type="RefSeq" id="XP_054225650.1">
    <molecule id="P43004-2"/>
    <property type="nucleotide sequence ID" value="XM_054369675.1"/>
</dbReference>
<dbReference type="RefSeq" id="XP_054225651.1">
    <molecule id="P43004-2"/>
    <property type="nucleotide sequence ID" value="XM_054369676.1"/>
</dbReference>
<dbReference type="RefSeq" id="XP_054225652.1">
    <molecule id="P43004-2"/>
    <property type="nucleotide sequence ID" value="XM_054369677.1"/>
</dbReference>
<dbReference type="RefSeq" id="XP_054225654.1">
    <molecule id="P43004-2"/>
    <property type="nucleotide sequence ID" value="XM_054369679.1"/>
</dbReference>
<dbReference type="RefSeq" id="XP_054225655.1">
    <molecule id="P43004-2"/>
    <property type="nucleotide sequence ID" value="XM_054369680.1"/>
</dbReference>
<dbReference type="PDB" id="7VR7">
    <property type="method" value="EM"/>
    <property type="resolution" value="2.80 A"/>
    <property type="chains" value="A=1-574"/>
</dbReference>
<dbReference type="PDB" id="7VR8">
    <property type="method" value="EM"/>
    <property type="resolution" value="3.20 A"/>
    <property type="chains" value="A=1-574"/>
</dbReference>
<dbReference type="PDB" id="7XR4">
    <property type="method" value="EM"/>
    <property type="resolution" value="3.40 A"/>
    <property type="chains" value="A/B/C=1-574"/>
</dbReference>
<dbReference type="PDB" id="7XR6">
    <property type="method" value="EM"/>
    <property type="resolution" value="3.40 A"/>
    <property type="chains" value="A/B/C=1-574"/>
</dbReference>
<dbReference type="PDBsum" id="7VR7"/>
<dbReference type="PDBsum" id="7VR8"/>
<dbReference type="PDBsum" id="7XR4"/>
<dbReference type="PDBsum" id="7XR6"/>
<dbReference type="EMDB" id="EMD-32097"/>
<dbReference type="EMDB" id="EMD-32098"/>
<dbReference type="EMDB" id="EMD-33407"/>
<dbReference type="EMDB" id="EMD-33408"/>
<dbReference type="SMR" id="P43004"/>
<dbReference type="BioGRID" id="112397">
    <property type="interactions" value="11"/>
</dbReference>
<dbReference type="CORUM" id="P43004"/>
<dbReference type="FunCoup" id="P43004">
    <property type="interactions" value="377"/>
</dbReference>
<dbReference type="IntAct" id="P43004">
    <property type="interactions" value="5"/>
</dbReference>
<dbReference type="MINT" id="P43004"/>
<dbReference type="STRING" id="9606.ENSP00000278379"/>
<dbReference type="BindingDB" id="P43004"/>
<dbReference type="ChEMBL" id="CHEMBL4973"/>
<dbReference type="DrugBank" id="DB08868">
    <property type="generic name" value="Fingolimod"/>
</dbReference>
<dbReference type="DrugBank" id="DB00142">
    <property type="generic name" value="Glutamic acid"/>
</dbReference>
<dbReference type="DrugBank" id="DB00683">
    <property type="generic name" value="Midazolam"/>
</dbReference>
<dbReference type="DrugCentral" id="P43004"/>
<dbReference type="GuidetoPHARMACOLOGY" id="869"/>
<dbReference type="TCDB" id="2.A.23.2.7">
    <property type="family name" value="the dicarboxylate/amino acid:cation (na(+) or h(+)) symporter (daacs) family"/>
</dbReference>
<dbReference type="GlyCosmos" id="P43004">
    <property type="glycosylation" value="2 sites, No reported glycans"/>
</dbReference>
<dbReference type="GlyGen" id="P43004">
    <property type="glycosylation" value="2 sites"/>
</dbReference>
<dbReference type="iPTMnet" id="P43004"/>
<dbReference type="PhosphoSitePlus" id="P43004"/>
<dbReference type="SwissPalm" id="P43004"/>
<dbReference type="BioMuta" id="SLC1A2"/>
<dbReference type="DMDM" id="3041668"/>
<dbReference type="MassIVE" id="P43004"/>
<dbReference type="PaxDb" id="9606-ENSP00000278379"/>
<dbReference type="PeptideAtlas" id="P43004"/>
<dbReference type="ProteomicsDB" id="55569">
    <molecule id="P43004-1"/>
</dbReference>
<dbReference type="ProteomicsDB" id="55570">
    <molecule id="P43004-2"/>
</dbReference>
<dbReference type="Antibodypedia" id="2179">
    <property type="antibodies" value="324 antibodies from 33 providers"/>
</dbReference>
<dbReference type="DNASU" id="6506"/>
<dbReference type="Ensembl" id="ENST00000278379.9">
    <molecule id="P43004-1"/>
    <property type="protein sequence ID" value="ENSP00000278379.3"/>
    <property type="gene ID" value="ENSG00000110436.13"/>
</dbReference>
<dbReference type="Ensembl" id="ENST00000395753.6">
    <molecule id="P43004-2"/>
    <property type="protein sequence ID" value="ENSP00000379102.1"/>
    <property type="gene ID" value="ENSG00000110436.13"/>
</dbReference>
<dbReference type="Ensembl" id="ENST00000643000.1">
    <molecule id="P43004-2"/>
    <property type="protein sequence ID" value="ENSP00000495164.1"/>
    <property type="gene ID" value="ENSG00000110436.13"/>
</dbReference>
<dbReference type="Ensembl" id="ENST00000643305.1">
    <molecule id="P43004-3"/>
    <property type="protein sequence ID" value="ENSP00000494828.1"/>
    <property type="gene ID" value="ENSG00000110436.13"/>
</dbReference>
<dbReference type="Ensembl" id="ENST00000644050.1">
    <molecule id="P43004-2"/>
    <property type="protein sequence ID" value="ENSP00000496123.1"/>
    <property type="gene ID" value="ENSG00000110436.13"/>
</dbReference>
<dbReference type="Ensembl" id="ENST00000644299.1">
    <molecule id="P43004-2"/>
    <property type="protein sequence ID" value="ENSP00000494669.1"/>
    <property type="gene ID" value="ENSG00000110436.13"/>
</dbReference>
<dbReference type="Ensembl" id="ENST00000645194.1">
    <molecule id="P43004-2"/>
    <property type="protein sequence ID" value="ENSP00000496093.1"/>
    <property type="gene ID" value="ENSG00000110436.13"/>
</dbReference>
<dbReference type="Ensembl" id="ENST00000645634.1">
    <molecule id="P43004-2"/>
    <property type="protein sequence ID" value="ENSP00000493945.1"/>
    <property type="gene ID" value="ENSG00000110436.13"/>
</dbReference>
<dbReference type="Ensembl" id="ENST00000647104.1">
    <molecule id="P43004-2"/>
    <property type="protein sequence ID" value="ENSP00000494025.1"/>
    <property type="gene ID" value="ENSG00000110436.13"/>
</dbReference>
<dbReference type="GeneID" id="6506"/>
<dbReference type="KEGG" id="hsa:6506"/>
<dbReference type="MANE-Select" id="ENST00000278379.9">
    <property type="protein sequence ID" value="ENSP00000278379.3"/>
    <property type="RefSeq nucleotide sequence ID" value="NM_004171.4"/>
    <property type="RefSeq protein sequence ID" value="NP_004162.2"/>
</dbReference>
<dbReference type="UCSC" id="uc001mwd.4">
    <molecule id="P43004-1"/>
    <property type="organism name" value="human"/>
</dbReference>
<dbReference type="AGR" id="HGNC:10940"/>
<dbReference type="CTD" id="6506"/>
<dbReference type="DisGeNET" id="6506"/>
<dbReference type="GeneCards" id="SLC1A2"/>
<dbReference type="HGNC" id="HGNC:10940">
    <property type="gene designation" value="SLC1A2"/>
</dbReference>
<dbReference type="HPA" id="ENSG00000110436">
    <property type="expression patterns" value="Tissue enriched (brain)"/>
</dbReference>
<dbReference type="MalaCards" id="SLC1A2"/>
<dbReference type="MIM" id="600300">
    <property type="type" value="gene"/>
</dbReference>
<dbReference type="MIM" id="617105">
    <property type="type" value="phenotype"/>
</dbReference>
<dbReference type="neXtProt" id="NX_P43004"/>
<dbReference type="OpenTargets" id="ENSG00000110436"/>
<dbReference type="Orphanet" id="442835">
    <property type="disease" value="Non-specific early-onset epileptic encephalopathy"/>
</dbReference>
<dbReference type="PharmGKB" id="PA35827"/>
<dbReference type="VEuPathDB" id="HostDB:ENSG00000110436"/>
<dbReference type="eggNOG" id="KOG3787">
    <property type="taxonomic scope" value="Eukaryota"/>
</dbReference>
<dbReference type="GeneTree" id="ENSGT00940000155379"/>
<dbReference type="HOGENOM" id="CLU_019375_3_0_1"/>
<dbReference type="InParanoid" id="P43004"/>
<dbReference type="OMA" id="TWTKEID"/>
<dbReference type="OrthoDB" id="5877963at2759"/>
<dbReference type="PAN-GO" id="P43004">
    <property type="GO annotations" value="6 GO annotations based on evolutionary models"/>
</dbReference>
<dbReference type="PhylomeDB" id="P43004"/>
<dbReference type="TreeFam" id="TF315206"/>
<dbReference type="PathwayCommons" id="P43004"/>
<dbReference type="Reactome" id="R-HSA-210455">
    <property type="pathway name" value="Astrocytic Glutamate-Glutamine Uptake And Metabolism"/>
</dbReference>
<dbReference type="Reactome" id="R-HSA-210500">
    <property type="pathway name" value="Glutamate Neurotransmitter Release Cycle"/>
</dbReference>
<dbReference type="Reactome" id="R-HSA-425393">
    <property type="pathway name" value="Transport of inorganic cations/anions and amino acids/oligopeptides"/>
</dbReference>
<dbReference type="SignaLink" id="P43004"/>
<dbReference type="SIGNOR" id="P43004"/>
<dbReference type="BioGRID-ORCS" id="6506">
    <property type="hits" value="10 hits in 1149 CRISPR screens"/>
</dbReference>
<dbReference type="CD-CODE" id="B5B9A610">
    <property type="entry name" value="PML body"/>
</dbReference>
<dbReference type="CD-CODE" id="FB4E32DD">
    <property type="entry name" value="Presynaptic clusters and postsynaptic densities"/>
</dbReference>
<dbReference type="ChiTaRS" id="SLC1A2">
    <property type="organism name" value="human"/>
</dbReference>
<dbReference type="GeneWiki" id="SLC1A2"/>
<dbReference type="GenomeRNAi" id="6506"/>
<dbReference type="Pharos" id="P43004">
    <property type="development level" value="Tchem"/>
</dbReference>
<dbReference type="PRO" id="PR:P43004"/>
<dbReference type="Proteomes" id="UP000005640">
    <property type="component" value="Chromosome 11"/>
</dbReference>
<dbReference type="RNAct" id="P43004">
    <property type="molecule type" value="protein"/>
</dbReference>
<dbReference type="Bgee" id="ENSG00000110436">
    <property type="expression patterns" value="Expressed in endothelial cell and 177 other cell types or tissues"/>
</dbReference>
<dbReference type="ExpressionAtlas" id="P43004">
    <property type="expression patterns" value="baseline and differential"/>
</dbReference>
<dbReference type="GO" id="GO:0097449">
    <property type="term" value="C:astrocyte projection"/>
    <property type="evidence" value="ECO:0000250"/>
    <property type="project" value="ARUK-UCL"/>
</dbReference>
<dbReference type="GO" id="GO:0030673">
    <property type="term" value="C:axolemma"/>
    <property type="evidence" value="ECO:0007669"/>
    <property type="project" value="Ensembl"/>
</dbReference>
<dbReference type="GO" id="GO:0044297">
    <property type="term" value="C:cell body"/>
    <property type="evidence" value="ECO:0000250"/>
    <property type="project" value="ARUK-UCL"/>
</dbReference>
<dbReference type="GO" id="GO:0009986">
    <property type="term" value="C:cell surface"/>
    <property type="evidence" value="ECO:0000314"/>
    <property type="project" value="UniProtKB"/>
</dbReference>
<dbReference type="GO" id="GO:0098978">
    <property type="term" value="C:glutamatergic synapse"/>
    <property type="evidence" value="ECO:0007669"/>
    <property type="project" value="Ensembl"/>
</dbReference>
<dbReference type="GO" id="GO:0016020">
    <property type="term" value="C:membrane"/>
    <property type="evidence" value="ECO:0000304"/>
    <property type="project" value="ProtInc"/>
</dbReference>
<dbReference type="GO" id="GO:0098796">
    <property type="term" value="C:membrane protein complex"/>
    <property type="evidence" value="ECO:0000314"/>
    <property type="project" value="ARUK-UCL"/>
</dbReference>
<dbReference type="GO" id="GO:0045121">
    <property type="term" value="C:membrane raft"/>
    <property type="evidence" value="ECO:0000314"/>
    <property type="project" value="ARUK-UCL"/>
</dbReference>
<dbReference type="GO" id="GO:0044306">
    <property type="term" value="C:neuron projection terminus"/>
    <property type="evidence" value="ECO:0007669"/>
    <property type="project" value="Ensembl"/>
</dbReference>
<dbReference type="GO" id="GO:0005886">
    <property type="term" value="C:plasma membrane"/>
    <property type="evidence" value="ECO:0000315"/>
    <property type="project" value="UniProtKB"/>
</dbReference>
<dbReference type="GO" id="GO:0042734">
    <property type="term" value="C:presynaptic membrane"/>
    <property type="evidence" value="ECO:0000314"/>
    <property type="project" value="SynGO"/>
</dbReference>
<dbReference type="GO" id="GO:0031982">
    <property type="term" value="C:vesicle"/>
    <property type="evidence" value="ECO:0007669"/>
    <property type="project" value="Ensembl"/>
</dbReference>
<dbReference type="GO" id="GO:0033229">
    <property type="term" value="F:cysteine transmembrane transporter activity"/>
    <property type="evidence" value="ECO:0007669"/>
    <property type="project" value="Ensembl"/>
</dbReference>
<dbReference type="GO" id="GO:0015501">
    <property type="term" value="F:glutamate:sodium symporter activity"/>
    <property type="evidence" value="ECO:0000314"/>
    <property type="project" value="UniProtKB"/>
</dbReference>
<dbReference type="GO" id="GO:0005314">
    <property type="term" value="F:high-affinity L-glutamate transmembrane transporter activity"/>
    <property type="evidence" value="ECO:0000314"/>
    <property type="project" value="UniProtKB"/>
</dbReference>
<dbReference type="GO" id="GO:0005313">
    <property type="term" value="F:L-glutamate transmembrane transporter activity"/>
    <property type="evidence" value="ECO:0000314"/>
    <property type="project" value="BHF-UCL"/>
</dbReference>
<dbReference type="GO" id="GO:0046872">
    <property type="term" value="F:metal ion binding"/>
    <property type="evidence" value="ECO:0007669"/>
    <property type="project" value="UniProtKB-KW"/>
</dbReference>
<dbReference type="GO" id="GO:0008509">
    <property type="term" value="F:monoatomic anion transmembrane transporter activity"/>
    <property type="evidence" value="ECO:0007669"/>
    <property type="project" value="Ensembl"/>
</dbReference>
<dbReference type="GO" id="GO:0015175">
    <property type="term" value="F:neutral L-amino acid transmembrane transporter activity"/>
    <property type="evidence" value="ECO:0000318"/>
    <property type="project" value="GO_Central"/>
</dbReference>
<dbReference type="GO" id="GO:0030534">
    <property type="term" value="P:adult behavior"/>
    <property type="evidence" value="ECO:0007669"/>
    <property type="project" value="Ensembl"/>
</dbReference>
<dbReference type="GO" id="GO:0071314">
    <property type="term" value="P:cellular response to cocaine"/>
    <property type="evidence" value="ECO:0007669"/>
    <property type="project" value="Ensembl"/>
</dbReference>
<dbReference type="GO" id="GO:0007268">
    <property type="term" value="P:chemical synaptic transmission"/>
    <property type="evidence" value="ECO:0000304"/>
    <property type="project" value="ProtInc"/>
</dbReference>
<dbReference type="GO" id="GO:0070779">
    <property type="term" value="P:D-aspartate import across plasma membrane"/>
    <property type="evidence" value="ECO:0000314"/>
    <property type="project" value="UniProtKB"/>
</dbReference>
<dbReference type="GO" id="GO:0006750">
    <property type="term" value="P:glutathione biosynthetic process"/>
    <property type="evidence" value="ECO:0007669"/>
    <property type="project" value="Ensembl"/>
</dbReference>
<dbReference type="GO" id="GO:0140009">
    <property type="term" value="P:L-aspartate import across plasma membrane"/>
    <property type="evidence" value="ECO:0000314"/>
    <property type="project" value="UniProtKB"/>
</dbReference>
<dbReference type="GO" id="GO:0070778">
    <property type="term" value="P:L-aspartate transmembrane transport"/>
    <property type="evidence" value="ECO:0000250"/>
    <property type="project" value="ARUK-UCL"/>
</dbReference>
<dbReference type="GO" id="GO:0098712">
    <property type="term" value="P:L-glutamate import across plasma membrane"/>
    <property type="evidence" value="ECO:0000314"/>
    <property type="project" value="UniProtKB"/>
</dbReference>
<dbReference type="GO" id="GO:0015813">
    <property type="term" value="P:L-glutamate transmembrane transport"/>
    <property type="evidence" value="ECO:0000314"/>
    <property type="project" value="UniProtKB"/>
</dbReference>
<dbReference type="GO" id="GO:0006811">
    <property type="term" value="P:monoatomic ion transport"/>
    <property type="evidence" value="ECO:0000304"/>
    <property type="project" value="Reactome"/>
</dbReference>
<dbReference type="GO" id="GO:0035264">
    <property type="term" value="P:multicellular organism growth"/>
    <property type="evidence" value="ECO:0007669"/>
    <property type="project" value="Ensembl"/>
</dbReference>
<dbReference type="GO" id="GO:0098810">
    <property type="term" value="P:neurotransmitter reuptake"/>
    <property type="evidence" value="ECO:0007669"/>
    <property type="project" value="Ensembl"/>
</dbReference>
<dbReference type="GO" id="GO:0006836">
    <property type="term" value="P:neurotransmitter transport"/>
    <property type="evidence" value="ECO:0000304"/>
    <property type="project" value="Reactome"/>
</dbReference>
<dbReference type="GO" id="GO:0046326">
    <property type="term" value="P:positive regulation of D-glucose import"/>
    <property type="evidence" value="ECO:0007669"/>
    <property type="project" value="Ensembl"/>
</dbReference>
<dbReference type="GO" id="GO:0070207">
    <property type="term" value="P:protein homotrimerization"/>
    <property type="evidence" value="ECO:0000314"/>
    <property type="project" value="UniProtKB"/>
</dbReference>
<dbReference type="GO" id="GO:0043200">
    <property type="term" value="P:response to amino acid"/>
    <property type="evidence" value="ECO:0007669"/>
    <property type="project" value="Ensembl"/>
</dbReference>
<dbReference type="GO" id="GO:0009611">
    <property type="term" value="P:response to wounding"/>
    <property type="evidence" value="ECO:0007669"/>
    <property type="project" value="Ensembl"/>
</dbReference>
<dbReference type="GO" id="GO:0009410">
    <property type="term" value="P:response to xenobiotic stimulus"/>
    <property type="evidence" value="ECO:0007669"/>
    <property type="project" value="Ensembl"/>
</dbReference>
<dbReference type="GO" id="GO:0021537">
    <property type="term" value="P:telencephalon development"/>
    <property type="evidence" value="ECO:0007669"/>
    <property type="project" value="Ensembl"/>
</dbReference>
<dbReference type="GO" id="GO:0070633">
    <property type="term" value="P:transepithelial transport"/>
    <property type="evidence" value="ECO:0000250"/>
    <property type="project" value="ARUK-UCL"/>
</dbReference>
<dbReference type="GO" id="GO:0150104">
    <property type="term" value="P:transport across blood-brain barrier"/>
    <property type="evidence" value="ECO:0000250"/>
    <property type="project" value="ARUK-UCL"/>
</dbReference>
<dbReference type="GO" id="GO:0007632">
    <property type="term" value="P:visual behavior"/>
    <property type="evidence" value="ECO:0007669"/>
    <property type="project" value="Ensembl"/>
</dbReference>
<dbReference type="FunFam" id="1.10.3860.10:FF:000002">
    <property type="entry name" value="Amino acid transporter"/>
    <property type="match status" value="1"/>
</dbReference>
<dbReference type="Gene3D" id="1.10.3860.10">
    <property type="entry name" value="Sodium:dicarboxylate symporter"/>
    <property type="match status" value="1"/>
</dbReference>
<dbReference type="InterPro" id="IPR050746">
    <property type="entry name" value="DAACS"/>
</dbReference>
<dbReference type="InterPro" id="IPR001991">
    <property type="entry name" value="Na-dicarboxylate_symporter"/>
</dbReference>
<dbReference type="InterPro" id="IPR018107">
    <property type="entry name" value="Na-dicarboxylate_symporter_CS"/>
</dbReference>
<dbReference type="InterPro" id="IPR036458">
    <property type="entry name" value="Na:dicarbo_symporter_sf"/>
</dbReference>
<dbReference type="PANTHER" id="PTHR11958:SF93">
    <property type="entry name" value="EXCITATORY AMINO ACID TRANSPORTER 2"/>
    <property type="match status" value="1"/>
</dbReference>
<dbReference type="PANTHER" id="PTHR11958">
    <property type="entry name" value="SODIUM/DICARBOXYLATE SYMPORTER-RELATED"/>
    <property type="match status" value="1"/>
</dbReference>
<dbReference type="Pfam" id="PF00375">
    <property type="entry name" value="SDF"/>
    <property type="match status" value="1"/>
</dbReference>
<dbReference type="PRINTS" id="PR00173">
    <property type="entry name" value="EDTRNSPORT"/>
</dbReference>
<dbReference type="SUPFAM" id="SSF118215">
    <property type="entry name" value="Proton glutamate symport protein"/>
    <property type="match status" value="1"/>
</dbReference>
<dbReference type="PROSITE" id="PS00713">
    <property type="entry name" value="NA_DICARBOXYL_SYMP_1"/>
    <property type="match status" value="1"/>
</dbReference>
<dbReference type="PROSITE" id="PS00714">
    <property type="entry name" value="NA_DICARBOXYL_SYMP_2"/>
    <property type="match status" value="1"/>
</dbReference>
<protein>
    <recommendedName>
        <fullName evidence="18">Excitatory amino acid transporter 2</fullName>
    </recommendedName>
    <alternativeName>
        <fullName>Glutamate/aspartate transporter II</fullName>
    </alternativeName>
    <alternativeName>
        <fullName>Sodium-dependent glutamate/aspartate transporter 2</fullName>
    </alternativeName>
    <alternativeName>
        <fullName>Solute carrier family 1 member 2</fullName>
    </alternativeName>
</protein>
<keyword id="KW-0002">3D-structure</keyword>
<keyword id="KW-0025">Alternative splicing</keyword>
<keyword id="KW-0029">Amino-acid transport</keyword>
<keyword id="KW-1003">Cell membrane</keyword>
<keyword id="KW-0868">Chloride</keyword>
<keyword id="KW-0225">Disease variant</keyword>
<keyword id="KW-0887">Epilepsy</keyword>
<keyword id="KW-0325">Glycoprotein</keyword>
<keyword id="KW-0449">Lipoprotein</keyword>
<keyword id="KW-0472">Membrane</keyword>
<keyword id="KW-0479">Metal-binding</keyword>
<keyword id="KW-0564">Palmitate</keyword>
<keyword id="KW-0597">Phosphoprotein</keyword>
<keyword id="KW-0630">Potassium</keyword>
<keyword id="KW-1267">Proteomics identification</keyword>
<keyword id="KW-1185">Reference proteome</keyword>
<keyword id="KW-0915">Sodium</keyword>
<keyword id="KW-0769">Symport</keyword>
<keyword id="KW-0812">Transmembrane</keyword>
<keyword id="KW-1133">Transmembrane helix</keyword>
<keyword id="KW-0813">Transport</keyword>
<comment type="function">
    <text evidence="4 7 11 14">Sodium-dependent, high-affinity amino acid transporter that mediates the uptake of L-glutamate and also L-aspartate and D-aspartate (PubMed:14506254, PubMed:15265858, PubMed:26690923, PubMed:7521911). Functions as a symporter that transports one amino acid molecule together with two or three Na(+) ions and one proton, in parallel with the counter-transport of one K(+) ion (PubMed:14506254). Mediates Cl(-) flux that is not coupled to amino acid transport; this avoids the accumulation of negative charges due to aspartate and Na(+) symport (PubMed:14506254). Essential for the rapid removal of released glutamate from the synaptic cleft, and for terminating the postsynaptic action of glutamate (By similarity).</text>
</comment>
<comment type="catalytic activity">
    <reaction evidence="14">
        <text>K(+)(in) + L-glutamate(out) + 3 Na(+)(out) + H(+)(out) = K(+)(out) + L-glutamate(in) + 3 Na(+)(in) + H(+)(in)</text>
        <dbReference type="Rhea" id="RHEA:70699"/>
        <dbReference type="ChEBI" id="CHEBI:15378"/>
        <dbReference type="ChEBI" id="CHEBI:29101"/>
        <dbReference type="ChEBI" id="CHEBI:29103"/>
        <dbReference type="ChEBI" id="CHEBI:29985"/>
    </reaction>
</comment>
<comment type="catalytic activity">
    <reaction evidence="14">
        <text>K(+)(in) + L-aspartate(out) + 3 Na(+)(out) + H(+)(out) = K(+)(out) + L-aspartate(in) + 3 Na(+)(in) + H(+)(in)</text>
        <dbReference type="Rhea" id="RHEA:70851"/>
        <dbReference type="ChEBI" id="CHEBI:15378"/>
        <dbReference type="ChEBI" id="CHEBI:29101"/>
        <dbReference type="ChEBI" id="CHEBI:29103"/>
        <dbReference type="ChEBI" id="CHEBI:29991"/>
    </reaction>
</comment>
<comment type="catalytic activity">
    <reaction evidence="14">
        <text>D-aspartate(out) + K(+)(in) + 3 Na(+)(out) + H(+)(out) = D-aspartate(in) + K(+)(out) + 3 Na(+)(in) + H(+)(in)</text>
        <dbReference type="Rhea" id="RHEA:71379"/>
        <dbReference type="ChEBI" id="CHEBI:15378"/>
        <dbReference type="ChEBI" id="CHEBI:29101"/>
        <dbReference type="ChEBI" id="CHEBI:29103"/>
        <dbReference type="ChEBI" id="CHEBI:29990"/>
    </reaction>
</comment>
<comment type="biophysicochemical properties">
    <kinetics>
        <KM evidence="14">97 uM for L-glutamate</KM>
        <KM evidence="14">54 uM for D-aspartate</KM>
        <KM evidence="14">18 uM for L-glutamate (when transfected in Xenopus laevis oocytes)</KM>
        <KM evidence="14">13 uM for D-aspartate (when transfected in Xenopus laevis oocytes)</KM>
        <KM evidence="14">7 uM for L-aspartate (when transfected in Xenopus laevis oocytes)</KM>
        <KM evidence="11">391 uM for L-glutamate (when transfected in Xenopus laevis oocytes)</KM>
    </kinetics>
</comment>
<comment type="subunit">
    <text evidence="2 7 8 9 10">Homotrimer (PubMed:15265858, PubMed:15483603, PubMed:26483543). Isoform 3 can oligomerize with isoform 1 (PubMed:20688910). Interacts with AJUBA (By similarity).</text>
</comment>
<comment type="interaction">
    <interactant intactId="EBI-3440986">
        <id>P43004</id>
    </interactant>
    <interactant intactId="EBI-466029">
        <id>P42858</id>
        <label>HTT</label>
    </interactant>
    <organismsDiffer>false</organismsDiffer>
    <experiments>12</experiments>
</comment>
<comment type="interaction">
    <interactant intactId="EBI-3440986">
        <id>P43004</id>
    </interactant>
    <interactant intactId="EBI-366182">
        <id>P10636</id>
        <label>MAPT</label>
    </interactant>
    <organismsDiffer>false</organismsDiffer>
    <experiments>4</experiments>
</comment>
<comment type="subcellular location">
    <subcellularLocation>
        <location evidence="6 7 11 14">Cell membrane</location>
        <topology evidence="18">Multi-pass membrane protein</topology>
    </subcellularLocation>
</comment>
<comment type="alternative products">
    <event type="alternative splicing"/>
    <isoform>
        <id>P43004-1</id>
        <name>1</name>
        <sequence type="displayed"/>
    </isoform>
    <isoform>
        <id>P43004-2</id>
        <name>2</name>
        <sequence type="described" ref="VSP_037152"/>
    </isoform>
    <isoform>
        <id>P43004-3</id>
        <name>3</name>
        <name>EEAT2b</name>
        <sequence type="described" ref="VSP_054934"/>
    </isoform>
</comment>
<comment type="domain">
    <text evidence="3">Contains eight transmembrane regions plus two helical hairpins that dip into the membrane. These helical hairpin structures play an important role in the transport process. The first enters the membrane from the cytoplasmic side, the second one from the extracellular side. During the transport cycle, the regions involved in amino acid transport, and especially the helical hairpins, move vertically by about 15-18 Angstroms, alternating between exposure to the aqueous phase and reinsertion in the lipid bilayer. In contrast, the regions involved in trimerization do not move.</text>
</comment>
<comment type="PTM">
    <text evidence="7">Glycosylated.</text>
</comment>
<comment type="PTM">
    <text evidence="4">Palmitoylation at Cys-38 is not required for correct subcellular localization, but is important for glutamate uptake activity.</text>
</comment>
<comment type="disease" evidence="12 13">
    <disease id="DI-04837">
        <name>Developmental and epileptic encephalopathy 41</name>
        <acronym>DEE41</acronym>
        <description>A form of epileptic encephalopathy, a heterogeneous group of severe early-onset epilepsies characterized by refractory seizures, neurodevelopmental impairment, and poor prognosis. Development is normal prior to seizure onset, after which cognitive and motor delays become apparent. DEE41 inheritance is autosomal dominant.</description>
        <dbReference type="MIM" id="617105"/>
    </disease>
    <text>The disease is caused by variants affecting the gene represented in this entry.</text>
</comment>
<comment type="similarity">
    <text evidence="18">Belongs to the dicarboxylate/amino acid:cation symporter (DAACS) (TC 2.A.23) family. SLC1A2 subfamily.</text>
</comment>
<evidence type="ECO:0000250" key="1">
    <source>
        <dbReference type="UniProtKB" id="O59010"/>
    </source>
</evidence>
<evidence type="ECO:0000250" key="2">
    <source>
        <dbReference type="UniProtKB" id="P31596"/>
    </source>
</evidence>
<evidence type="ECO:0000250" key="3">
    <source>
        <dbReference type="UniProtKB" id="P43003"/>
    </source>
</evidence>
<evidence type="ECO:0000250" key="4">
    <source>
        <dbReference type="UniProtKB" id="P43006"/>
    </source>
</evidence>
<evidence type="ECO:0000255" key="5"/>
<evidence type="ECO:0000269" key="6">
    <source>
    </source>
</evidence>
<evidence type="ECO:0000269" key="7">
    <source>
    </source>
</evidence>
<evidence type="ECO:0000269" key="8">
    <source>
    </source>
</evidence>
<evidence type="ECO:0000269" key="9">
    <source>
    </source>
</evidence>
<evidence type="ECO:0000269" key="10">
    <source>
    </source>
</evidence>
<evidence type="ECO:0000269" key="11">
    <source>
    </source>
</evidence>
<evidence type="ECO:0000269" key="12">
    <source>
    </source>
</evidence>
<evidence type="ECO:0000269" key="13">
    <source>
    </source>
</evidence>
<evidence type="ECO:0000269" key="14">
    <source>
    </source>
</evidence>
<evidence type="ECO:0000303" key="15">
    <source>
    </source>
</evidence>
<evidence type="ECO:0000303" key="16">
    <source>
    </source>
</evidence>
<evidence type="ECO:0000303" key="17">
    <source>
    </source>
</evidence>
<evidence type="ECO:0000305" key="18"/>
<evidence type="ECO:0000312" key="19">
    <source>
        <dbReference type="HGNC" id="HGNC:10940"/>
    </source>
</evidence>
<evidence type="ECO:0007829" key="20">
    <source>
        <dbReference type="PDB" id="7XR4"/>
    </source>
</evidence>
<organism>
    <name type="scientific">Homo sapiens</name>
    <name type="common">Human</name>
    <dbReference type="NCBI Taxonomy" id="9606"/>
    <lineage>
        <taxon>Eukaryota</taxon>
        <taxon>Metazoa</taxon>
        <taxon>Chordata</taxon>
        <taxon>Craniata</taxon>
        <taxon>Vertebrata</taxon>
        <taxon>Euteleostomi</taxon>
        <taxon>Mammalia</taxon>
        <taxon>Eutheria</taxon>
        <taxon>Euarchontoglires</taxon>
        <taxon>Primates</taxon>
        <taxon>Haplorrhini</taxon>
        <taxon>Catarrhini</taxon>
        <taxon>Hominidae</taxon>
        <taxon>Homo</taxon>
    </lineage>
</organism>
<proteinExistence type="evidence at protein level"/>